<accession>B2XT21</accession>
<reference key="1">
    <citation type="journal article" date="2008" name="BMC Genomics">
        <title>Chloroplast genome sequencing analysis of Heterosigma akashiwo CCMP452 (West Atlantic) and NIES293 (West Pacific) strains.</title>
        <authorList>
            <person name="Cattolico R.A."/>
            <person name="Jacobs M.A."/>
            <person name="Zhou Y."/>
            <person name="Chang J."/>
            <person name="Duplessis M."/>
            <person name="Lybrand T."/>
            <person name="McKay J."/>
            <person name="Ong H.C."/>
            <person name="Sims E."/>
            <person name="Rocap G."/>
        </authorList>
    </citation>
    <scope>NUCLEOTIDE SEQUENCE [LARGE SCALE GENOMIC DNA]</scope>
    <source>
        <strain>NIES-293</strain>
    </source>
</reference>
<dbReference type="EC" id="1.10.3.9" evidence="1"/>
<dbReference type="EMBL" id="EU168190">
    <property type="protein sequence ID" value="ABV65919.1"/>
    <property type="molecule type" value="Genomic_DNA"/>
</dbReference>
<dbReference type="EMBL" id="EU168190">
    <property type="protein sequence ID" value="ABV65963.1"/>
    <property type="molecule type" value="Genomic_DNA"/>
</dbReference>
<dbReference type="SMR" id="B2XT21"/>
<dbReference type="GO" id="GO:0009535">
    <property type="term" value="C:chloroplast thylakoid membrane"/>
    <property type="evidence" value="ECO:0007669"/>
    <property type="project" value="UniProtKB-SubCell"/>
</dbReference>
<dbReference type="GO" id="GO:0009523">
    <property type="term" value="C:photosystem II"/>
    <property type="evidence" value="ECO:0007669"/>
    <property type="project" value="UniProtKB-KW"/>
</dbReference>
<dbReference type="GO" id="GO:0016168">
    <property type="term" value="F:chlorophyll binding"/>
    <property type="evidence" value="ECO:0007669"/>
    <property type="project" value="UniProtKB-UniRule"/>
</dbReference>
<dbReference type="GO" id="GO:0045156">
    <property type="term" value="F:electron transporter, transferring electrons within the cyclic electron transport pathway of photosynthesis activity"/>
    <property type="evidence" value="ECO:0007669"/>
    <property type="project" value="InterPro"/>
</dbReference>
<dbReference type="GO" id="GO:0005506">
    <property type="term" value="F:iron ion binding"/>
    <property type="evidence" value="ECO:0007669"/>
    <property type="project" value="UniProtKB-UniRule"/>
</dbReference>
<dbReference type="GO" id="GO:0016491">
    <property type="term" value="F:oxidoreductase activity"/>
    <property type="evidence" value="ECO:0007669"/>
    <property type="project" value="UniProtKB-KW"/>
</dbReference>
<dbReference type="GO" id="GO:0009772">
    <property type="term" value="P:photosynthetic electron transport in photosystem II"/>
    <property type="evidence" value="ECO:0007669"/>
    <property type="project" value="InterPro"/>
</dbReference>
<dbReference type="CDD" id="cd09288">
    <property type="entry name" value="Photosystem-II_D2"/>
    <property type="match status" value="1"/>
</dbReference>
<dbReference type="FunFam" id="1.20.85.10:FF:000001">
    <property type="entry name" value="photosystem II D2 protein-like"/>
    <property type="match status" value="1"/>
</dbReference>
<dbReference type="Gene3D" id="1.20.85.10">
    <property type="entry name" value="Photosystem II protein D1-like"/>
    <property type="match status" value="1"/>
</dbReference>
<dbReference type="HAMAP" id="MF_01383">
    <property type="entry name" value="PSII_PsbD_D2"/>
    <property type="match status" value="1"/>
</dbReference>
<dbReference type="InterPro" id="IPR055266">
    <property type="entry name" value="D1/D2"/>
</dbReference>
<dbReference type="InterPro" id="IPR036854">
    <property type="entry name" value="Photo_II_D1/D2_sf"/>
</dbReference>
<dbReference type="InterPro" id="IPR000484">
    <property type="entry name" value="Photo_RC_L/M"/>
</dbReference>
<dbReference type="InterPro" id="IPR055265">
    <property type="entry name" value="Photo_RC_L/M_CS"/>
</dbReference>
<dbReference type="InterPro" id="IPR005868">
    <property type="entry name" value="PSII_PsbD/D2"/>
</dbReference>
<dbReference type="NCBIfam" id="TIGR01152">
    <property type="entry name" value="psbD"/>
    <property type="match status" value="1"/>
</dbReference>
<dbReference type="PANTHER" id="PTHR33149:SF12">
    <property type="entry name" value="PHOTOSYSTEM II D2 PROTEIN"/>
    <property type="match status" value="1"/>
</dbReference>
<dbReference type="PANTHER" id="PTHR33149">
    <property type="entry name" value="PHOTOSYSTEM II PROTEIN D1"/>
    <property type="match status" value="1"/>
</dbReference>
<dbReference type="Pfam" id="PF00124">
    <property type="entry name" value="Photo_RC"/>
    <property type="match status" value="1"/>
</dbReference>
<dbReference type="PRINTS" id="PR00256">
    <property type="entry name" value="REACTNCENTRE"/>
</dbReference>
<dbReference type="SUPFAM" id="SSF81483">
    <property type="entry name" value="Bacterial photosystem II reaction centre, L and M subunits"/>
    <property type="match status" value="1"/>
</dbReference>
<dbReference type="PROSITE" id="PS00244">
    <property type="entry name" value="REACTION_CENTER"/>
    <property type="match status" value="1"/>
</dbReference>
<feature type="chain" id="PRO_0000359707" description="Photosystem II D2 protein">
    <location>
        <begin position="1"/>
        <end position="351"/>
    </location>
</feature>
<feature type="transmembrane region" description="Helical" evidence="1">
    <location>
        <begin position="39"/>
        <end position="59"/>
    </location>
</feature>
<feature type="transmembrane region" description="Helical" evidence="1">
    <location>
        <begin position="123"/>
        <end position="139"/>
    </location>
</feature>
<feature type="transmembrane region" description="Helical" evidence="1">
    <location>
        <begin position="151"/>
        <end position="164"/>
    </location>
</feature>
<feature type="transmembrane region" description="Helical" evidence="1">
    <location>
        <begin position="206"/>
        <end position="226"/>
    </location>
</feature>
<feature type="transmembrane region" description="Helical" evidence="1">
    <location>
        <begin position="277"/>
        <end position="293"/>
    </location>
</feature>
<feature type="binding site" description="axial binding residue" evidence="1">
    <location>
        <position position="116"/>
    </location>
    <ligand>
        <name>chlorophyll a</name>
        <dbReference type="ChEBI" id="CHEBI:58416"/>
        <label>ChlzD2</label>
    </ligand>
    <ligandPart>
        <name>Mg</name>
        <dbReference type="ChEBI" id="CHEBI:25107"/>
    </ligandPart>
</feature>
<feature type="binding site" evidence="1">
    <location>
        <position position="128"/>
    </location>
    <ligand>
        <name>pheophytin a</name>
        <dbReference type="ChEBI" id="CHEBI:136840"/>
        <label>D2</label>
    </ligand>
</feature>
<feature type="binding site" evidence="1">
    <location>
        <position position="141"/>
    </location>
    <ligand>
        <name>pheophytin a</name>
        <dbReference type="ChEBI" id="CHEBI:136840"/>
        <label>D2</label>
    </ligand>
</feature>
<feature type="binding site" description="axial binding residue" evidence="1">
    <location>
        <position position="196"/>
    </location>
    <ligand>
        <name>chlorophyll a</name>
        <dbReference type="ChEBI" id="CHEBI:58416"/>
        <label>PD2</label>
    </ligand>
    <ligandPart>
        <name>Mg</name>
        <dbReference type="ChEBI" id="CHEBI:25107"/>
    </ligandPart>
</feature>
<feature type="binding site" evidence="1">
    <location>
        <position position="213"/>
    </location>
    <ligand>
        <name>a plastoquinone</name>
        <dbReference type="ChEBI" id="CHEBI:17757"/>
        <label>Q(A)</label>
    </ligand>
</feature>
<feature type="binding site" evidence="1">
    <location>
        <position position="213"/>
    </location>
    <ligand>
        <name>Fe cation</name>
        <dbReference type="ChEBI" id="CHEBI:24875"/>
        <note>ligand shared with heterodimeric partner</note>
    </ligand>
</feature>
<feature type="binding site" evidence="1">
    <location>
        <position position="260"/>
    </location>
    <ligand>
        <name>a plastoquinone</name>
        <dbReference type="ChEBI" id="CHEBI:17757"/>
        <label>Q(A)</label>
    </ligand>
</feature>
<feature type="binding site" evidence="1">
    <location>
        <position position="267"/>
    </location>
    <ligand>
        <name>Fe cation</name>
        <dbReference type="ChEBI" id="CHEBI:24875"/>
        <note>ligand shared with heterodimeric partner</note>
    </ligand>
</feature>
<geneLocation type="chloroplast"/>
<proteinExistence type="inferred from homology"/>
<sequence>MTIAIGQNQERGVFDLVDDWLKRDRFVFVGWSGLLLFPTAYLAVGGWFTGTTFVTSWYTHGLASSYLEGCNFLTAAVSTPANSMGHSLILLWGPEAQGDFTRWCQIGGLWTFVALHGAFGLIGFCLRQFEIARLVGIRPYNAIAFSGPISIFVSVFLLYPLGQASWFFAPSFGVAAIFRFLLFLQGFHNWTLNPFHMMGVAGILGGALLCAIHGATVENTLFEDGDAANTFRAFTPTQSEETYSMVTANRFWSQIFGVAFSNKRWLHFFMLFVPVTGLWTSAIGIVGLALNLRAYDFVSQELRAAEDPEFETFYTKNILLNEGIRAWMAAQDQPHENFVFPEEVLPRGNAL</sequence>
<name>PSBD_HETA2</name>
<evidence type="ECO:0000255" key="1">
    <source>
        <dbReference type="HAMAP-Rule" id="MF_01383"/>
    </source>
</evidence>
<keyword id="KW-0148">Chlorophyll</keyword>
<keyword id="KW-0150">Chloroplast</keyword>
<keyword id="KW-0157">Chromophore</keyword>
<keyword id="KW-0249">Electron transport</keyword>
<keyword id="KW-0408">Iron</keyword>
<keyword id="KW-0460">Magnesium</keyword>
<keyword id="KW-0472">Membrane</keyword>
<keyword id="KW-0479">Metal-binding</keyword>
<keyword id="KW-0560">Oxidoreductase</keyword>
<keyword id="KW-0602">Photosynthesis</keyword>
<keyword id="KW-0604">Photosystem II</keyword>
<keyword id="KW-0934">Plastid</keyword>
<keyword id="KW-0793">Thylakoid</keyword>
<keyword id="KW-0812">Transmembrane</keyword>
<keyword id="KW-1133">Transmembrane helix</keyword>
<keyword id="KW-0813">Transport</keyword>
<protein>
    <recommendedName>
        <fullName evidence="1">Photosystem II D2 protein</fullName>
        <shortName evidence="1">PSII D2 protein</shortName>
        <ecNumber evidence="1">1.10.3.9</ecNumber>
    </recommendedName>
    <alternativeName>
        <fullName evidence="1">Photosystem Q(A) protein</fullName>
    </alternativeName>
</protein>
<organism>
    <name type="scientific">Heterosigma akashiwo (strain NIES-293 / 8280G21-1)</name>
    <dbReference type="NCBI Taxonomy" id="536047"/>
    <lineage>
        <taxon>Eukaryota</taxon>
        <taxon>Sar</taxon>
        <taxon>Stramenopiles</taxon>
        <taxon>Ochrophyta</taxon>
        <taxon>Raphidophyceae</taxon>
        <taxon>Chattonellales</taxon>
        <taxon>Chattonellaceae</taxon>
        <taxon>Heterosigma</taxon>
    </lineage>
</organism>
<gene>
    <name evidence="1" type="primary">psbD1</name>
    <name type="ordered locus">Heak293_Cp012</name>
</gene>
<gene>
    <name evidence="1" type="primary">psbD2</name>
    <name type="ordered locus">Heak293_Cp056</name>
</gene>
<comment type="function">
    <text evidence="1">Photosystem II (PSII) is a light-driven water:plastoquinone oxidoreductase that uses light energy to abstract electrons from H(2)O, generating O(2) and a proton gradient subsequently used for ATP formation. It consists of a core antenna complex that captures photons, and an electron transfer chain that converts photonic excitation into a charge separation. The D1/D2 (PsbA/PsbD) reaction center heterodimer binds P680, the primary electron donor of PSII as well as several subsequent electron acceptors. D2 is needed for assembly of a stable PSII complex.</text>
</comment>
<comment type="catalytic activity">
    <reaction evidence="1">
        <text>2 a plastoquinone + 4 hnu + 2 H2O = 2 a plastoquinol + O2</text>
        <dbReference type="Rhea" id="RHEA:36359"/>
        <dbReference type="Rhea" id="RHEA-COMP:9561"/>
        <dbReference type="Rhea" id="RHEA-COMP:9562"/>
        <dbReference type="ChEBI" id="CHEBI:15377"/>
        <dbReference type="ChEBI" id="CHEBI:15379"/>
        <dbReference type="ChEBI" id="CHEBI:17757"/>
        <dbReference type="ChEBI" id="CHEBI:30212"/>
        <dbReference type="ChEBI" id="CHEBI:62192"/>
        <dbReference type="EC" id="1.10.3.9"/>
    </reaction>
</comment>
<comment type="cofactor">
    <text evidence="1">The D1/D2 heterodimer binds P680, chlorophylls that are the primary electron donor of PSII, and subsequent electron acceptors. It shares a non-heme iron and each subunit binds pheophytin, quinone, additional chlorophylls, carotenoids and lipids. There is also a Cl(-1) ion associated with D1 and D2, which is required for oxygen evolution. The PSII complex binds additional chlorophylls, carotenoids and specific lipids.</text>
</comment>
<comment type="subunit">
    <text evidence="1">PSII is composed of 1 copy each of membrane proteins PsbA, PsbB, PsbC, PsbD, PsbE, PsbF, PsbH, PsbI, PsbJ, PsbK, PsbL, PsbM, PsbT, PsbX, PsbY, PsbZ, Psb30/Ycf12, at least 3 peripheral proteins of the oxygen-evolving complex and a large number of cofactors. It forms dimeric complexes.</text>
</comment>
<comment type="subcellular location">
    <subcellularLocation>
        <location evidence="1">Plastid</location>
        <location evidence="1">Chloroplast thylakoid membrane</location>
        <topology evidence="1">Multi-pass membrane protein</topology>
    </subcellularLocation>
</comment>
<comment type="miscellaneous">
    <text evidence="1">2 of the reaction center chlorophylls (ChlD1 and ChlD2) are entirely coordinated by water.</text>
</comment>
<comment type="similarity">
    <text evidence="1">Belongs to the reaction center PufL/M/PsbA/D family.</text>
</comment>